<comment type="function">
    <text evidence="1">Transcription regulator component of the regulatory network controlling carbon source utilization through ubiquitination and deubiquitination involving creA, creB, creC, creD and acrB. Represses the transcription of the alcR, alcA and aldA genes by binding to a GC-rich region in their promoter. Also plays a role in response to carbon starvation and the control of extracellular proteases activity (By similarity).</text>
</comment>
<comment type="subunit">
    <text evidence="1">Interacts with creB.</text>
</comment>
<comment type="subcellular location">
    <subcellularLocation>
        <location evidence="1">Nucleus</location>
    </subcellularLocation>
</comment>
<comment type="PTM">
    <text evidence="1">Ubiquitinated. Deubiquitinated by creB, probably to control its activity or amount (By similarity).</text>
</comment>
<comment type="similarity">
    <text evidence="4">Belongs to the creA/MIG C2H2-type zinc-finger protein family.</text>
</comment>
<organism>
    <name type="scientific">Aspergillus niger (strain ATCC MYA-4892 / CBS 513.88 / FGSC A1513)</name>
    <dbReference type="NCBI Taxonomy" id="425011"/>
    <lineage>
        <taxon>Eukaryota</taxon>
        <taxon>Fungi</taxon>
        <taxon>Dikarya</taxon>
        <taxon>Ascomycota</taxon>
        <taxon>Pezizomycotina</taxon>
        <taxon>Eurotiomycetes</taxon>
        <taxon>Eurotiomycetidae</taxon>
        <taxon>Eurotiales</taxon>
        <taxon>Aspergillaceae</taxon>
        <taxon>Aspergillus</taxon>
        <taxon>Aspergillus subgen. Circumdati</taxon>
    </lineage>
</organism>
<accession>A2QCJ9</accession>
<keyword id="KW-0238">DNA-binding</keyword>
<keyword id="KW-0479">Metal-binding</keyword>
<keyword id="KW-0539">Nucleus</keyword>
<keyword id="KW-1185">Reference proteome</keyword>
<keyword id="KW-0677">Repeat</keyword>
<keyword id="KW-0678">Repressor</keyword>
<keyword id="KW-0804">Transcription</keyword>
<keyword id="KW-0805">Transcription regulation</keyword>
<keyword id="KW-0832">Ubl conjugation</keyword>
<keyword id="KW-0862">Zinc</keyword>
<keyword id="KW-0863">Zinc-finger</keyword>
<reference key="1">
    <citation type="journal article" date="2007" name="Nat. Biotechnol.">
        <title>Genome sequencing and analysis of the versatile cell factory Aspergillus niger CBS 513.88.</title>
        <authorList>
            <person name="Pel H.J."/>
            <person name="de Winde J.H."/>
            <person name="Archer D.B."/>
            <person name="Dyer P.S."/>
            <person name="Hofmann G."/>
            <person name="Schaap P.J."/>
            <person name="Turner G."/>
            <person name="de Vries R.P."/>
            <person name="Albang R."/>
            <person name="Albermann K."/>
            <person name="Andersen M.R."/>
            <person name="Bendtsen J.D."/>
            <person name="Benen J.A.E."/>
            <person name="van den Berg M."/>
            <person name="Breestraat S."/>
            <person name="Caddick M.X."/>
            <person name="Contreras R."/>
            <person name="Cornell M."/>
            <person name="Coutinho P.M."/>
            <person name="Danchin E.G.J."/>
            <person name="Debets A.J.M."/>
            <person name="Dekker P."/>
            <person name="van Dijck P.W.M."/>
            <person name="van Dijk A."/>
            <person name="Dijkhuizen L."/>
            <person name="Driessen A.J.M."/>
            <person name="d'Enfert C."/>
            <person name="Geysens S."/>
            <person name="Goosen C."/>
            <person name="Groot G.S.P."/>
            <person name="de Groot P.W.J."/>
            <person name="Guillemette T."/>
            <person name="Henrissat B."/>
            <person name="Herweijer M."/>
            <person name="van den Hombergh J.P.T.W."/>
            <person name="van den Hondel C.A.M.J.J."/>
            <person name="van der Heijden R.T.J.M."/>
            <person name="van der Kaaij R.M."/>
            <person name="Klis F.M."/>
            <person name="Kools H.J."/>
            <person name="Kubicek C.P."/>
            <person name="van Kuyk P.A."/>
            <person name="Lauber J."/>
            <person name="Lu X."/>
            <person name="van der Maarel M.J.E.C."/>
            <person name="Meulenberg R."/>
            <person name="Menke H."/>
            <person name="Mortimer M.A."/>
            <person name="Nielsen J."/>
            <person name="Oliver S.G."/>
            <person name="Olsthoorn M."/>
            <person name="Pal K."/>
            <person name="van Peij N.N.M.E."/>
            <person name="Ram A.F.J."/>
            <person name="Rinas U."/>
            <person name="Roubos J.A."/>
            <person name="Sagt C.M.J."/>
            <person name="Schmoll M."/>
            <person name="Sun J."/>
            <person name="Ussery D."/>
            <person name="Varga J."/>
            <person name="Vervecken W."/>
            <person name="van de Vondervoort P.J.J."/>
            <person name="Wedler H."/>
            <person name="Woesten H.A.B."/>
            <person name="Zeng A.-P."/>
            <person name="van Ooyen A.J.J."/>
            <person name="Visser J."/>
            <person name="Stam H."/>
        </authorList>
    </citation>
    <scope>NUCLEOTIDE SEQUENCE [LARGE SCALE GENOMIC DNA]</scope>
    <source>
        <strain>ATCC MYA-4892 / CBS 513.88 / FGSC A1513</strain>
    </source>
</reference>
<sequence length="427" mass="46016">MPPPASSVDFSNLLNPQNNSTDSTPSTPVDSSKTPSTPSSTQSNSNMASSVSLLPPLMKGARPATEEVRQDLPRPYKCPLCDRAFHRLEHQTRHIRTHTGEKPHACQFPGCTKRFSRSDELTRHSRIHNNPNSRRSNKAQHLAAAAAAAAGQDNAMANTASAMMPPPSKPMTRSAPVSQVGSPDISPPHSFSNYASHMRSNLGPYARKGERASSGMDINLLATAASQVERDEHFSFHAGPRNHHLFSSRHHGSGRLPSLSAYAITHNMSRSHSHEDDDGYSHRVKRSRPNSPNSTAPSSPTFSHDSLSPTPDHTPLATPAHSPRLRPLGSSDLHLPSIRHLSLHHTPALAPMEPQPEGPNYYSPSQGHHGPSISDIMSKPDGTQRKLPVPQVPKVAVQDMLNPGSGFSSVTSSTANSVAGGDLAERF</sequence>
<feature type="chain" id="PRO_0000395724" description="Probable DNA-binding protein creA">
    <location>
        <begin position="1"/>
        <end position="427"/>
    </location>
</feature>
<feature type="zinc finger region" description="C2H2-type 1" evidence="2">
    <location>
        <begin position="76"/>
        <end position="98"/>
    </location>
</feature>
<feature type="zinc finger region" description="C2H2-type 2" evidence="2">
    <location>
        <begin position="104"/>
        <end position="128"/>
    </location>
</feature>
<feature type="region of interest" description="Disordered" evidence="3">
    <location>
        <begin position="1"/>
        <end position="70"/>
    </location>
</feature>
<feature type="region of interest" description="Disordered" evidence="3">
    <location>
        <begin position="117"/>
        <end position="140"/>
    </location>
</feature>
<feature type="region of interest" description="Disordered" evidence="3">
    <location>
        <begin position="164"/>
        <end position="185"/>
    </location>
</feature>
<feature type="region of interest" description="Disordered" evidence="3">
    <location>
        <begin position="269"/>
        <end position="333"/>
    </location>
</feature>
<feature type="region of interest" description="Disordered" evidence="3">
    <location>
        <begin position="348"/>
        <end position="388"/>
    </location>
</feature>
<feature type="region of interest" description="Disordered" evidence="3">
    <location>
        <begin position="404"/>
        <end position="427"/>
    </location>
</feature>
<feature type="compositionally biased region" description="Low complexity" evidence="3">
    <location>
        <begin position="15"/>
        <end position="52"/>
    </location>
</feature>
<feature type="compositionally biased region" description="Basic and acidic residues" evidence="3">
    <location>
        <begin position="272"/>
        <end position="281"/>
    </location>
</feature>
<feature type="compositionally biased region" description="Low complexity" evidence="3">
    <location>
        <begin position="289"/>
        <end position="303"/>
    </location>
</feature>
<feature type="compositionally biased region" description="Low complexity" evidence="3">
    <location>
        <begin position="404"/>
        <end position="419"/>
    </location>
</feature>
<gene>
    <name type="primary">creA</name>
    <name type="ORF">An02g03830</name>
</gene>
<dbReference type="EMBL" id="AM270005">
    <property type="protein sequence ID" value="CAL00597.1"/>
    <property type="molecule type" value="Genomic_DNA"/>
</dbReference>
<dbReference type="RefSeq" id="XP_001399519.1">
    <property type="nucleotide sequence ID" value="XM_001399482.2"/>
</dbReference>
<dbReference type="SMR" id="A2QCJ9"/>
<dbReference type="EnsemblFungi" id="CAL00597">
    <property type="protein sequence ID" value="CAL00597"/>
    <property type="gene ID" value="An02g03830"/>
</dbReference>
<dbReference type="GeneID" id="4978870"/>
<dbReference type="KEGG" id="ang:An02g03830"/>
<dbReference type="VEuPathDB" id="FungiDB:An02g03830"/>
<dbReference type="HOGENOM" id="CLU_036230_0_0_1"/>
<dbReference type="Proteomes" id="UP000006706">
    <property type="component" value="Chromosome 4R"/>
</dbReference>
<dbReference type="GO" id="GO:0005737">
    <property type="term" value="C:cytoplasm"/>
    <property type="evidence" value="ECO:0007669"/>
    <property type="project" value="TreeGrafter"/>
</dbReference>
<dbReference type="GO" id="GO:0005634">
    <property type="term" value="C:nucleus"/>
    <property type="evidence" value="ECO:0000316"/>
    <property type="project" value="AspGD"/>
</dbReference>
<dbReference type="GO" id="GO:0003700">
    <property type="term" value="F:DNA-binding transcription factor activity"/>
    <property type="evidence" value="ECO:0000315"/>
    <property type="project" value="AspGD"/>
</dbReference>
<dbReference type="GO" id="GO:0000978">
    <property type="term" value="F:RNA polymerase II cis-regulatory region sequence-specific DNA binding"/>
    <property type="evidence" value="ECO:0007669"/>
    <property type="project" value="TreeGrafter"/>
</dbReference>
<dbReference type="GO" id="GO:0008270">
    <property type="term" value="F:zinc ion binding"/>
    <property type="evidence" value="ECO:0007669"/>
    <property type="project" value="UniProtKB-KW"/>
</dbReference>
<dbReference type="GO" id="GO:0000433">
    <property type="term" value="P:carbon catabolite repression of transcription from RNA polymerase II promoter by glucose"/>
    <property type="evidence" value="ECO:0007669"/>
    <property type="project" value="TreeGrafter"/>
</dbReference>
<dbReference type="GO" id="GO:0043609">
    <property type="term" value="P:regulation of carbon utilization"/>
    <property type="evidence" value="ECO:0000315"/>
    <property type="project" value="AspGD"/>
</dbReference>
<dbReference type="GO" id="GO:0010468">
    <property type="term" value="P:regulation of gene expression"/>
    <property type="evidence" value="ECO:0000315"/>
    <property type="project" value="AspGD"/>
</dbReference>
<dbReference type="FunFam" id="3.30.160.60:FF:000089">
    <property type="entry name" value="DNA-binding protein creA"/>
    <property type="match status" value="1"/>
</dbReference>
<dbReference type="FunFam" id="3.30.160.60:FF:000152">
    <property type="entry name" value="DNA-binding protein creA"/>
    <property type="match status" value="1"/>
</dbReference>
<dbReference type="Gene3D" id="3.30.160.60">
    <property type="entry name" value="Classic Zinc Finger"/>
    <property type="match status" value="2"/>
</dbReference>
<dbReference type="InterPro" id="IPR051007">
    <property type="entry name" value="creA/MIG_C2H2-ZnF"/>
</dbReference>
<dbReference type="InterPro" id="IPR036236">
    <property type="entry name" value="Znf_C2H2_sf"/>
</dbReference>
<dbReference type="InterPro" id="IPR013087">
    <property type="entry name" value="Znf_C2H2_type"/>
</dbReference>
<dbReference type="PANTHER" id="PTHR47428">
    <property type="entry name" value="REGULATORY PROTEIN MIG1-RELATED"/>
    <property type="match status" value="1"/>
</dbReference>
<dbReference type="PANTHER" id="PTHR47428:SF1">
    <property type="entry name" value="REGULATORY PROTEIN MIG1-RELATED"/>
    <property type="match status" value="1"/>
</dbReference>
<dbReference type="Pfam" id="PF00096">
    <property type="entry name" value="zf-C2H2"/>
    <property type="match status" value="2"/>
</dbReference>
<dbReference type="SMART" id="SM00355">
    <property type="entry name" value="ZnF_C2H2"/>
    <property type="match status" value="2"/>
</dbReference>
<dbReference type="SUPFAM" id="SSF57667">
    <property type="entry name" value="beta-beta-alpha zinc fingers"/>
    <property type="match status" value="1"/>
</dbReference>
<dbReference type="PROSITE" id="PS00028">
    <property type="entry name" value="ZINC_FINGER_C2H2_1"/>
    <property type="match status" value="2"/>
</dbReference>
<dbReference type="PROSITE" id="PS50157">
    <property type="entry name" value="ZINC_FINGER_C2H2_2"/>
    <property type="match status" value="2"/>
</dbReference>
<proteinExistence type="inferred from homology"/>
<protein>
    <recommendedName>
        <fullName>Probable DNA-binding protein creA</fullName>
    </recommendedName>
    <alternativeName>
        <fullName>Carbon catabolite repressor A</fullName>
    </alternativeName>
</protein>
<evidence type="ECO:0000250" key="1"/>
<evidence type="ECO:0000255" key="2">
    <source>
        <dbReference type="PROSITE-ProRule" id="PRU00042"/>
    </source>
</evidence>
<evidence type="ECO:0000256" key="3">
    <source>
        <dbReference type="SAM" id="MobiDB-lite"/>
    </source>
</evidence>
<evidence type="ECO:0000305" key="4"/>
<name>CREA_ASPNC</name>